<accession>O14265</accession>
<organism>
    <name type="scientific">Schizosaccharomyces pombe (strain 972 / ATCC 24843)</name>
    <name type="common">Fission yeast</name>
    <dbReference type="NCBI Taxonomy" id="284812"/>
    <lineage>
        <taxon>Eukaryota</taxon>
        <taxon>Fungi</taxon>
        <taxon>Dikarya</taxon>
        <taxon>Ascomycota</taxon>
        <taxon>Taphrinomycotina</taxon>
        <taxon>Schizosaccharomycetes</taxon>
        <taxon>Schizosaccharomycetales</taxon>
        <taxon>Schizosaccharomycetaceae</taxon>
        <taxon>Schizosaccharomyces</taxon>
    </lineage>
</organism>
<keyword id="KW-0375">Hydrogen ion transport</keyword>
<keyword id="KW-0406">Ion transport</keyword>
<keyword id="KW-0472">Membrane</keyword>
<keyword id="KW-1185">Reference proteome</keyword>
<keyword id="KW-0813">Transport</keyword>
<keyword id="KW-0926">Vacuole</keyword>
<comment type="function">
    <text evidence="1">Subunit of the V1 complex of vacuolar(H+)-ATPase (V-ATPase), a multisubunit enzyme composed of a peripheral complex (V1) that hydrolyzes ATP and a membrane integral complex (V0) that translocates protons (By similarity). V-ATPase is responsible for acidifying and maintaining the pH of intracellular compartments (By similarity). This subunit is essential for activity, but not assembly, of the enzyme complex (By similarity). This subunit is also required for silencing the ATPase activity of V-ATPase when V1 is detached from V0 (By similarity).</text>
</comment>
<comment type="subunit">
    <text evidence="1">V-ATPase is a heteromultimeric enzyme composed of a peripheral catalytic V1 complex (components A to H) attached to an integral membrane V0 proton pore complex (components: a, c, c', c'', d, e, f and VOA1).</text>
</comment>
<comment type="subcellular location">
    <subcellularLocation>
        <location evidence="1">Vacuole membrane</location>
        <topology evidence="2">Peripheral membrane protein</topology>
        <orientation evidence="2">Cytoplasmic side</orientation>
    </subcellularLocation>
</comment>
<comment type="similarity">
    <text evidence="2">Belongs to the V-ATPase H subunit family.</text>
</comment>
<feature type="chain" id="PRO_0000124201" description="V-type proton ATPase subunit H">
    <location>
        <begin position="1"/>
        <end position="450"/>
    </location>
</feature>
<evidence type="ECO:0000250" key="1">
    <source>
        <dbReference type="UniProtKB" id="P41807"/>
    </source>
</evidence>
<evidence type="ECO:0000305" key="2"/>
<dbReference type="EMBL" id="CU329670">
    <property type="protein sequence ID" value="CAB16727.2"/>
    <property type="molecule type" value="Genomic_DNA"/>
</dbReference>
<dbReference type="PIR" id="T39088">
    <property type="entry name" value="T39088"/>
</dbReference>
<dbReference type="RefSeq" id="NP_593848.1">
    <property type="nucleotide sequence ID" value="NM_001019277.2"/>
</dbReference>
<dbReference type="SMR" id="O14265"/>
<dbReference type="FunCoup" id="O14265">
    <property type="interactions" value="520"/>
</dbReference>
<dbReference type="STRING" id="284812.O14265"/>
<dbReference type="iPTMnet" id="O14265"/>
<dbReference type="PaxDb" id="4896-SPAC7D4.10.1"/>
<dbReference type="EnsemblFungi" id="SPAC7D4.10.1">
    <property type="protein sequence ID" value="SPAC7D4.10.1:pep"/>
    <property type="gene ID" value="SPAC7D4.10"/>
</dbReference>
<dbReference type="GeneID" id="2541906"/>
<dbReference type="KEGG" id="spo:2541906"/>
<dbReference type="PomBase" id="SPAC7D4.10">
    <property type="gene designation" value="vma13"/>
</dbReference>
<dbReference type="VEuPathDB" id="FungiDB:SPAC7D4.10"/>
<dbReference type="eggNOG" id="KOG2759">
    <property type="taxonomic scope" value="Eukaryota"/>
</dbReference>
<dbReference type="HOGENOM" id="CLU_025709_4_0_1"/>
<dbReference type="InParanoid" id="O14265"/>
<dbReference type="OMA" id="FRWMTFQ"/>
<dbReference type="PhylomeDB" id="O14265"/>
<dbReference type="Reactome" id="R-SPO-1222556">
    <property type="pathway name" value="ROS and RNS production in phagocytes"/>
</dbReference>
<dbReference type="Reactome" id="R-SPO-77387">
    <property type="pathway name" value="Insulin receptor recycling"/>
</dbReference>
<dbReference type="Reactome" id="R-SPO-917977">
    <property type="pathway name" value="Transferrin endocytosis and recycling"/>
</dbReference>
<dbReference type="Reactome" id="R-SPO-9639288">
    <property type="pathway name" value="Amino acids regulate mTORC1"/>
</dbReference>
<dbReference type="PRO" id="PR:O14265"/>
<dbReference type="Proteomes" id="UP000002485">
    <property type="component" value="Chromosome I"/>
</dbReference>
<dbReference type="GO" id="GO:0000329">
    <property type="term" value="C:fungal-type vacuole membrane"/>
    <property type="evidence" value="ECO:0000318"/>
    <property type="project" value="GO_Central"/>
</dbReference>
<dbReference type="GO" id="GO:0000221">
    <property type="term" value="C:vacuolar proton-transporting V-type ATPase, V1 domain"/>
    <property type="evidence" value="ECO:0000266"/>
    <property type="project" value="PomBase"/>
</dbReference>
<dbReference type="GO" id="GO:0016887">
    <property type="term" value="F:ATP hydrolysis activity"/>
    <property type="evidence" value="ECO:0000305"/>
    <property type="project" value="PomBase"/>
</dbReference>
<dbReference type="GO" id="GO:0046961">
    <property type="term" value="F:proton-transporting ATPase activity, rotational mechanism"/>
    <property type="evidence" value="ECO:0007669"/>
    <property type="project" value="InterPro"/>
</dbReference>
<dbReference type="GO" id="GO:1902600">
    <property type="term" value="P:proton transmembrane transport"/>
    <property type="evidence" value="ECO:0000305"/>
    <property type="project" value="PomBase"/>
</dbReference>
<dbReference type="GO" id="GO:0007035">
    <property type="term" value="P:vacuolar acidification"/>
    <property type="evidence" value="ECO:0000266"/>
    <property type="project" value="PomBase"/>
</dbReference>
<dbReference type="CDD" id="cd00256">
    <property type="entry name" value="VATPase_H"/>
    <property type="match status" value="1"/>
</dbReference>
<dbReference type="Gene3D" id="1.25.10.10">
    <property type="entry name" value="Leucine-rich Repeat Variant"/>
    <property type="match status" value="1"/>
</dbReference>
<dbReference type="Gene3D" id="1.25.40.150">
    <property type="entry name" value="V-type ATPase, subunit H, C-terminal domain"/>
    <property type="match status" value="1"/>
</dbReference>
<dbReference type="InterPro" id="IPR011989">
    <property type="entry name" value="ARM-like"/>
</dbReference>
<dbReference type="InterPro" id="IPR016024">
    <property type="entry name" value="ARM-type_fold"/>
</dbReference>
<dbReference type="InterPro" id="IPR004908">
    <property type="entry name" value="ATPase_V1-cplx_hsu"/>
</dbReference>
<dbReference type="InterPro" id="IPR011987">
    <property type="entry name" value="ATPase_V1-cplx_hsu_C"/>
</dbReference>
<dbReference type="InterPro" id="IPR038497">
    <property type="entry name" value="ATPase_V1-cplx_hsu_C_sf"/>
</dbReference>
<dbReference type="PANTHER" id="PTHR10698">
    <property type="entry name" value="V-TYPE PROTON ATPASE SUBUNIT H"/>
    <property type="match status" value="1"/>
</dbReference>
<dbReference type="PANTHER" id="PTHR10698:SF0">
    <property type="entry name" value="V-TYPE PROTON ATPASE SUBUNIT H"/>
    <property type="match status" value="1"/>
</dbReference>
<dbReference type="Pfam" id="PF11698">
    <property type="entry name" value="V-ATPase_H_C"/>
    <property type="match status" value="1"/>
</dbReference>
<dbReference type="Pfam" id="PF03224">
    <property type="entry name" value="V-ATPase_H_N"/>
    <property type="match status" value="1"/>
</dbReference>
<dbReference type="PIRSF" id="PIRSF032184">
    <property type="entry name" value="ATPase_V1_H"/>
    <property type="match status" value="1"/>
</dbReference>
<dbReference type="SUPFAM" id="SSF48371">
    <property type="entry name" value="ARM repeat"/>
    <property type="match status" value="1"/>
</dbReference>
<name>VATH_SCHPO</name>
<reference key="1">
    <citation type="journal article" date="2002" name="Nature">
        <title>The genome sequence of Schizosaccharomyces pombe.</title>
        <authorList>
            <person name="Wood V."/>
            <person name="Gwilliam R."/>
            <person name="Rajandream M.A."/>
            <person name="Lyne M.H."/>
            <person name="Lyne R."/>
            <person name="Stewart A."/>
            <person name="Sgouros J.G."/>
            <person name="Peat N."/>
            <person name="Hayles J."/>
            <person name="Baker S.G."/>
            <person name="Basham D."/>
            <person name="Bowman S."/>
            <person name="Brooks K."/>
            <person name="Brown D."/>
            <person name="Brown S."/>
            <person name="Chillingworth T."/>
            <person name="Churcher C.M."/>
            <person name="Collins M."/>
            <person name="Connor R."/>
            <person name="Cronin A."/>
            <person name="Davis P."/>
            <person name="Feltwell T."/>
            <person name="Fraser A."/>
            <person name="Gentles S."/>
            <person name="Goble A."/>
            <person name="Hamlin N."/>
            <person name="Harris D.E."/>
            <person name="Hidalgo J."/>
            <person name="Hodgson G."/>
            <person name="Holroyd S."/>
            <person name="Hornsby T."/>
            <person name="Howarth S."/>
            <person name="Huckle E.J."/>
            <person name="Hunt S."/>
            <person name="Jagels K."/>
            <person name="James K.D."/>
            <person name="Jones L."/>
            <person name="Jones M."/>
            <person name="Leather S."/>
            <person name="McDonald S."/>
            <person name="McLean J."/>
            <person name="Mooney P."/>
            <person name="Moule S."/>
            <person name="Mungall K.L."/>
            <person name="Murphy L.D."/>
            <person name="Niblett D."/>
            <person name="Odell C."/>
            <person name="Oliver K."/>
            <person name="O'Neil S."/>
            <person name="Pearson D."/>
            <person name="Quail M.A."/>
            <person name="Rabbinowitsch E."/>
            <person name="Rutherford K.M."/>
            <person name="Rutter S."/>
            <person name="Saunders D."/>
            <person name="Seeger K."/>
            <person name="Sharp S."/>
            <person name="Skelton J."/>
            <person name="Simmonds M.N."/>
            <person name="Squares R."/>
            <person name="Squares S."/>
            <person name="Stevens K."/>
            <person name="Taylor K."/>
            <person name="Taylor R.G."/>
            <person name="Tivey A."/>
            <person name="Walsh S.V."/>
            <person name="Warren T."/>
            <person name="Whitehead S."/>
            <person name="Woodward J.R."/>
            <person name="Volckaert G."/>
            <person name="Aert R."/>
            <person name="Robben J."/>
            <person name="Grymonprez B."/>
            <person name="Weltjens I."/>
            <person name="Vanstreels E."/>
            <person name="Rieger M."/>
            <person name="Schaefer M."/>
            <person name="Mueller-Auer S."/>
            <person name="Gabel C."/>
            <person name="Fuchs M."/>
            <person name="Duesterhoeft A."/>
            <person name="Fritzc C."/>
            <person name="Holzer E."/>
            <person name="Moestl D."/>
            <person name="Hilbert H."/>
            <person name="Borzym K."/>
            <person name="Langer I."/>
            <person name="Beck A."/>
            <person name="Lehrach H."/>
            <person name="Reinhardt R."/>
            <person name="Pohl T.M."/>
            <person name="Eger P."/>
            <person name="Zimmermann W."/>
            <person name="Wedler H."/>
            <person name="Wambutt R."/>
            <person name="Purnelle B."/>
            <person name="Goffeau A."/>
            <person name="Cadieu E."/>
            <person name="Dreano S."/>
            <person name="Gloux S."/>
            <person name="Lelaure V."/>
            <person name="Mottier S."/>
            <person name="Galibert F."/>
            <person name="Aves S.J."/>
            <person name="Xiang Z."/>
            <person name="Hunt C."/>
            <person name="Moore K."/>
            <person name="Hurst S.M."/>
            <person name="Lucas M."/>
            <person name="Rochet M."/>
            <person name="Gaillardin C."/>
            <person name="Tallada V.A."/>
            <person name="Garzon A."/>
            <person name="Thode G."/>
            <person name="Daga R.R."/>
            <person name="Cruzado L."/>
            <person name="Jimenez J."/>
            <person name="Sanchez M."/>
            <person name="del Rey F."/>
            <person name="Benito J."/>
            <person name="Dominguez A."/>
            <person name="Revuelta J.L."/>
            <person name="Moreno S."/>
            <person name="Armstrong J."/>
            <person name="Forsburg S.L."/>
            <person name="Cerutti L."/>
            <person name="Lowe T."/>
            <person name="McCombie W.R."/>
            <person name="Paulsen I."/>
            <person name="Potashkin J."/>
            <person name="Shpakovski G.V."/>
            <person name="Ussery D."/>
            <person name="Barrell B.G."/>
            <person name="Nurse P."/>
        </authorList>
    </citation>
    <scope>NUCLEOTIDE SEQUENCE [LARGE SCALE GENOMIC DNA]</scope>
    <source>
        <strain>972 / ATCC 24843</strain>
    </source>
</reference>
<gene>
    <name type="primary">vma13</name>
    <name type="ORF">SPAC7D4.10</name>
</gene>
<protein>
    <recommendedName>
        <fullName>V-type proton ATPase subunit H</fullName>
        <shortName>V-ATPase subunit H</shortName>
    </recommendedName>
    <alternativeName>
        <fullName>V-ATPase 54 kDa subunit</fullName>
    </alternativeName>
    <alternativeName>
        <fullName>Vacuolar proton pump subunit H</fullName>
    </alternativeName>
</protein>
<sequence>MSNSDLELSNAASPPPVELDNSQVDEIINNVRCVAIPWQGYQRSGSLEENELQEIENLTGKPLSAYVKTAEEDTTAYSNLFLKLLSMKDTPDVVNFALVKLADTLLNSNKFLSAFGPAFYDFLEKDESYINYLDDDSKLLFARVFALCSSSSPCSVAKAFTLFLEYLGKLMQSLNPLTRLFAVQCLNGVLTLKAHRYALWAENTCSFRLAELLRNSIGDTQLQYYSLFCFWQLTFESHIAQDINKRFDLIKLLVQIIRSDTKTKVYRLVLAILVNLIDKAPKDTISTMLLEHVDKAVQLLQKRKWADEDITNYLDFITSTLDESSKHLSTFDMYKSELDTGILHWSPSHRSEDFWHQNAKRLNEDNYALLKKLFHIVQYNEDNTSLAVACHDLGAYIRSYPEGRSLIIKYGAKQRIMDLMSHPDPEVRFEALSTVQLLMTEVCFLSKITL</sequence>
<proteinExistence type="inferred from homology"/>